<gene>
    <name evidence="1" type="primary">sucC</name>
    <name type="ordered locus">A2cp1_2321</name>
</gene>
<feature type="chain" id="PRO_1000197692" description="Succinate--CoA ligase [ADP-forming] subunit beta">
    <location>
        <begin position="1"/>
        <end position="388"/>
    </location>
</feature>
<feature type="domain" description="ATP-grasp" evidence="1">
    <location>
        <begin position="9"/>
        <end position="244"/>
    </location>
</feature>
<feature type="binding site" evidence="1">
    <location>
        <position position="46"/>
    </location>
    <ligand>
        <name>ATP</name>
        <dbReference type="ChEBI" id="CHEBI:30616"/>
    </ligand>
</feature>
<feature type="binding site" evidence="1">
    <location>
        <begin position="53"/>
        <end position="55"/>
    </location>
    <ligand>
        <name>ATP</name>
        <dbReference type="ChEBI" id="CHEBI:30616"/>
    </ligand>
</feature>
<feature type="binding site" evidence="1">
    <location>
        <position position="99"/>
    </location>
    <ligand>
        <name>ATP</name>
        <dbReference type="ChEBI" id="CHEBI:30616"/>
    </ligand>
</feature>
<feature type="binding site" evidence="1">
    <location>
        <position position="102"/>
    </location>
    <ligand>
        <name>ATP</name>
        <dbReference type="ChEBI" id="CHEBI:30616"/>
    </ligand>
</feature>
<feature type="binding site" evidence="1">
    <location>
        <position position="107"/>
    </location>
    <ligand>
        <name>ATP</name>
        <dbReference type="ChEBI" id="CHEBI:30616"/>
    </ligand>
</feature>
<feature type="binding site" evidence="1">
    <location>
        <position position="199"/>
    </location>
    <ligand>
        <name>Mg(2+)</name>
        <dbReference type="ChEBI" id="CHEBI:18420"/>
    </ligand>
</feature>
<feature type="binding site" evidence="1">
    <location>
        <position position="213"/>
    </location>
    <ligand>
        <name>Mg(2+)</name>
        <dbReference type="ChEBI" id="CHEBI:18420"/>
    </ligand>
</feature>
<feature type="binding site" evidence="1">
    <location>
        <position position="264"/>
    </location>
    <ligand>
        <name>substrate</name>
        <note>ligand shared with subunit alpha</note>
    </ligand>
</feature>
<feature type="binding site" evidence="1">
    <location>
        <begin position="321"/>
        <end position="323"/>
    </location>
    <ligand>
        <name>substrate</name>
        <note>ligand shared with subunit alpha</note>
    </ligand>
</feature>
<dbReference type="EC" id="6.2.1.5" evidence="1"/>
<dbReference type="EMBL" id="CP001359">
    <property type="protein sequence ID" value="ACL65659.1"/>
    <property type="molecule type" value="Genomic_DNA"/>
</dbReference>
<dbReference type="RefSeq" id="WP_012526259.1">
    <property type="nucleotide sequence ID" value="NC_011891.1"/>
</dbReference>
<dbReference type="SMR" id="B8JAE0"/>
<dbReference type="KEGG" id="acp:A2cp1_2321"/>
<dbReference type="HOGENOM" id="CLU_037430_0_2_7"/>
<dbReference type="UniPathway" id="UPA00223">
    <property type="reaction ID" value="UER00999"/>
</dbReference>
<dbReference type="Proteomes" id="UP000007089">
    <property type="component" value="Chromosome"/>
</dbReference>
<dbReference type="GO" id="GO:0005829">
    <property type="term" value="C:cytosol"/>
    <property type="evidence" value="ECO:0007669"/>
    <property type="project" value="TreeGrafter"/>
</dbReference>
<dbReference type="GO" id="GO:0042709">
    <property type="term" value="C:succinate-CoA ligase complex"/>
    <property type="evidence" value="ECO:0007669"/>
    <property type="project" value="TreeGrafter"/>
</dbReference>
<dbReference type="GO" id="GO:0005524">
    <property type="term" value="F:ATP binding"/>
    <property type="evidence" value="ECO:0007669"/>
    <property type="project" value="UniProtKB-UniRule"/>
</dbReference>
<dbReference type="GO" id="GO:0000287">
    <property type="term" value="F:magnesium ion binding"/>
    <property type="evidence" value="ECO:0007669"/>
    <property type="project" value="UniProtKB-UniRule"/>
</dbReference>
<dbReference type="GO" id="GO:0004775">
    <property type="term" value="F:succinate-CoA ligase (ADP-forming) activity"/>
    <property type="evidence" value="ECO:0007669"/>
    <property type="project" value="UniProtKB-UniRule"/>
</dbReference>
<dbReference type="GO" id="GO:0004776">
    <property type="term" value="F:succinate-CoA ligase (GDP-forming) activity"/>
    <property type="evidence" value="ECO:0007669"/>
    <property type="project" value="RHEA"/>
</dbReference>
<dbReference type="GO" id="GO:0006104">
    <property type="term" value="P:succinyl-CoA metabolic process"/>
    <property type="evidence" value="ECO:0007669"/>
    <property type="project" value="TreeGrafter"/>
</dbReference>
<dbReference type="GO" id="GO:0006099">
    <property type="term" value="P:tricarboxylic acid cycle"/>
    <property type="evidence" value="ECO:0007669"/>
    <property type="project" value="UniProtKB-UniRule"/>
</dbReference>
<dbReference type="FunFam" id="3.30.1490.20:FF:000002">
    <property type="entry name" value="Succinate--CoA ligase [ADP-forming] subunit beta"/>
    <property type="match status" value="1"/>
</dbReference>
<dbReference type="FunFam" id="3.30.470.20:FF:000002">
    <property type="entry name" value="Succinate--CoA ligase [ADP-forming] subunit beta"/>
    <property type="match status" value="1"/>
</dbReference>
<dbReference type="FunFam" id="3.40.50.261:FF:000001">
    <property type="entry name" value="Succinate--CoA ligase [ADP-forming] subunit beta"/>
    <property type="match status" value="1"/>
</dbReference>
<dbReference type="Gene3D" id="3.30.1490.20">
    <property type="entry name" value="ATP-grasp fold, A domain"/>
    <property type="match status" value="1"/>
</dbReference>
<dbReference type="Gene3D" id="3.30.470.20">
    <property type="entry name" value="ATP-grasp fold, B domain"/>
    <property type="match status" value="1"/>
</dbReference>
<dbReference type="Gene3D" id="3.40.50.261">
    <property type="entry name" value="Succinyl-CoA synthetase domains"/>
    <property type="match status" value="1"/>
</dbReference>
<dbReference type="HAMAP" id="MF_00558">
    <property type="entry name" value="Succ_CoA_beta"/>
    <property type="match status" value="1"/>
</dbReference>
<dbReference type="InterPro" id="IPR013650">
    <property type="entry name" value="ATP-grasp_succ-CoA_synth-type"/>
</dbReference>
<dbReference type="InterPro" id="IPR013815">
    <property type="entry name" value="ATP_grasp_subdomain_1"/>
</dbReference>
<dbReference type="InterPro" id="IPR017866">
    <property type="entry name" value="Succ-CoA_synthase_bsu_CS"/>
</dbReference>
<dbReference type="InterPro" id="IPR005811">
    <property type="entry name" value="SUCC_ACL_C"/>
</dbReference>
<dbReference type="InterPro" id="IPR005809">
    <property type="entry name" value="Succ_CoA_ligase-like_bsu"/>
</dbReference>
<dbReference type="InterPro" id="IPR016102">
    <property type="entry name" value="Succinyl-CoA_synth-like"/>
</dbReference>
<dbReference type="NCBIfam" id="NF001913">
    <property type="entry name" value="PRK00696.1"/>
    <property type="match status" value="1"/>
</dbReference>
<dbReference type="NCBIfam" id="TIGR01016">
    <property type="entry name" value="sucCoAbeta"/>
    <property type="match status" value="1"/>
</dbReference>
<dbReference type="PANTHER" id="PTHR11815:SF10">
    <property type="entry name" value="SUCCINATE--COA LIGASE [GDP-FORMING] SUBUNIT BETA, MITOCHONDRIAL"/>
    <property type="match status" value="1"/>
</dbReference>
<dbReference type="PANTHER" id="PTHR11815">
    <property type="entry name" value="SUCCINYL-COA SYNTHETASE BETA CHAIN"/>
    <property type="match status" value="1"/>
</dbReference>
<dbReference type="Pfam" id="PF08442">
    <property type="entry name" value="ATP-grasp_2"/>
    <property type="match status" value="1"/>
</dbReference>
<dbReference type="Pfam" id="PF00549">
    <property type="entry name" value="Ligase_CoA"/>
    <property type="match status" value="1"/>
</dbReference>
<dbReference type="PIRSF" id="PIRSF001554">
    <property type="entry name" value="SucCS_beta"/>
    <property type="match status" value="1"/>
</dbReference>
<dbReference type="SUPFAM" id="SSF56059">
    <property type="entry name" value="Glutathione synthetase ATP-binding domain-like"/>
    <property type="match status" value="1"/>
</dbReference>
<dbReference type="SUPFAM" id="SSF52210">
    <property type="entry name" value="Succinyl-CoA synthetase domains"/>
    <property type="match status" value="1"/>
</dbReference>
<dbReference type="PROSITE" id="PS01217">
    <property type="entry name" value="SUCCINYL_COA_LIG_3"/>
    <property type="match status" value="1"/>
</dbReference>
<proteinExistence type="inferred from homology"/>
<accession>B8JAE0</accession>
<sequence length="388" mass="41122">MKIHEYQAKEILRKFGVAVPRGYLAVTPLEAEGAARQLGGGISAVKAQIHAGGRGKGGGVKLARSPDEARQHAEAMLGMMLKTPQTGPDGQEVRKVYVEEGCRIARELYLGMTLDREIGRLAVMASVEGGVDIEEVAAKHPDKILREWISPLTGLMPFQARRLAFGLGLTGDSVTAFVRFATGLYNAYVATDASLAEINPLVITVGGEVLALDAKMNFDDNALYRHPDIAAMRDPDEEDPKETQAKEYDLSYIALDGDIGCMVNGAGLAMATMDVIKLSGGQPANFLDVGGGADEDKVTAAFKIILSDPHVKAVLVNIFGGIMKCDVIANGIVAAAKQVGLSIPLVVRLEGTNVELGKDILAHSELKIIPADDLGDAARKVVQAARAA</sequence>
<keyword id="KW-0067">ATP-binding</keyword>
<keyword id="KW-0436">Ligase</keyword>
<keyword id="KW-0460">Magnesium</keyword>
<keyword id="KW-0479">Metal-binding</keyword>
<keyword id="KW-0547">Nucleotide-binding</keyword>
<keyword id="KW-0816">Tricarboxylic acid cycle</keyword>
<organism>
    <name type="scientific">Anaeromyxobacter dehalogenans (strain 2CP-1 / ATCC BAA-258)</name>
    <dbReference type="NCBI Taxonomy" id="455488"/>
    <lineage>
        <taxon>Bacteria</taxon>
        <taxon>Pseudomonadati</taxon>
        <taxon>Myxococcota</taxon>
        <taxon>Myxococcia</taxon>
        <taxon>Myxococcales</taxon>
        <taxon>Cystobacterineae</taxon>
        <taxon>Anaeromyxobacteraceae</taxon>
        <taxon>Anaeromyxobacter</taxon>
    </lineage>
</organism>
<comment type="function">
    <text evidence="1">Succinyl-CoA synthetase functions in the citric acid cycle (TCA), coupling the hydrolysis of succinyl-CoA to the synthesis of either ATP or GTP and thus represents the only step of substrate-level phosphorylation in the TCA. The beta subunit provides nucleotide specificity of the enzyme and binds the substrate succinate, while the binding sites for coenzyme A and phosphate are found in the alpha subunit.</text>
</comment>
<comment type="catalytic activity">
    <reaction evidence="1">
        <text>succinate + ATP + CoA = succinyl-CoA + ADP + phosphate</text>
        <dbReference type="Rhea" id="RHEA:17661"/>
        <dbReference type="ChEBI" id="CHEBI:30031"/>
        <dbReference type="ChEBI" id="CHEBI:30616"/>
        <dbReference type="ChEBI" id="CHEBI:43474"/>
        <dbReference type="ChEBI" id="CHEBI:57287"/>
        <dbReference type="ChEBI" id="CHEBI:57292"/>
        <dbReference type="ChEBI" id="CHEBI:456216"/>
        <dbReference type="EC" id="6.2.1.5"/>
    </reaction>
    <physiologicalReaction direction="right-to-left" evidence="1">
        <dbReference type="Rhea" id="RHEA:17663"/>
    </physiologicalReaction>
</comment>
<comment type="catalytic activity">
    <reaction evidence="1">
        <text>GTP + succinate + CoA = succinyl-CoA + GDP + phosphate</text>
        <dbReference type="Rhea" id="RHEA:22120"/>
        <dbReference type="ChEBI" id="CHEBI:30031"/>
        <dbReference type="ChEBI" id="CHEBI:37565"/>
        <dbReference type="ChEBI" id="CHEBI:43474"/>
        <dbReference type="ChEBI" id="CHEBI:57287"/>
        <dbReference type="ChEBI" id="CHEBI:57292"/>
        <dbReference type="ChEBI" id="CHEBI:58189"/>
    </reaction>
    <physiologicalReaction direction="right-to-left" evidence="1">
        <dbReference type="Rhea" id="RHEA:22122"/>
    </physiologicalReaction>
</comment>
<comment type="cofactor">
    <cofactor evidence="1">
        <name>Mg(2+)</name>
        <dbReference type="ChEBI" id="CHEBI:18420"/>
    </cofactor>
    <text evidence="1">Binds 1 Mg(2+) ion per subunit.</text>
</comment>
<comment type="pathway">
    <text evidence="1">Carbohydrate metabolism; tricarboxylic acid cycle; succinate from succinyl-CoA (ligase route): step 1/1.</text>
</comment>
<comment type="subunit">
    <text evidence="1">Heterotetramer of two alpha and two beta subunits.</text>
</comment>
<comment type="similarity">
    <text evidence="1">Belongs to the succinate/malate CoA ligase beta subunit family.</text>
</comment>
<name>SUCC_ANAD2</name>
<reference key="1">
    <citation type="submission" date="2009-01" db="EMBL/GenBank/DDBJ databases">
        <title>Complete sequence of Anaeromyxobacter dehalogenans 2CP-1.</title>
        <authorList>
            <person name="Lucas S."/>
            <person name="Copeland A."/>
            <person name="Lapidus A."/>
            <person name="Glavina del Rio T."/>
            <person name="Dalin E."/>
            <person name="Tice H."/>
            <person name="Bruce D."/>
            <person name="Goodwin L."/>
            <person name="Pitluck S."/>
            <person name="Saunders E."/>
            <person name="Brettin T."/>
            <person name="Detter J.C."/>
            <person name="Han C."/>
            <person name="Larimer F."/>
            <person name="Land M."/>
            <person name="Hauser L."/>
            <person name="Kyrpides N."/>
            <person name="Ovchinnikova G."/>
            <person name="Beliaev A.S."/>
            <person name="Richardson P."/>
        </authorList>
    </citation>
    <scope>NUCLEOTIDE SEQUENCE [LARGE SCALE GENOMIC DNA]</scope>
    <source>
        <strain>2CP-1 / ATCC BAA-258</strain>
    </source>
</reference>
<evidence type="ECO:0000255" key="1">
    <source>
        <dbReference type="HAMAP-Rule" id="MF_00558"/>
    </source>
</evidence>
<protein>
    <recommendedName>
        <fullName evidence="1">Succinate--CoA ligase [ADP-forming] subunit beta</fullName>
        <ecNumber evidence="1">6.2.1.5</ecNumber>
    </recommendedName>
    <alternativeName>
        <fullName evidence="1">Succinyl-CoA synthetase subunit beta</fullName>
        <shortName evidence="1">SCS-beta</shortName>
    </alternativeName>
</protein>